<dbReference type="EC" id="2.7.1.30" evidence="1"/>
<dbReference type="EMBL" id="CP000697">
    <property type="protein sequence ID" value="ABQ31578.1"/>
    <property type="molecule type" value="Genomic_DNA"/>
</dbReference>
<dbReference type="RefSeq" id="WP_007424080.1">
    <property type="nucleotide sequence ID" value="NC_009484.1"/>
</dbReference>
<dbReference type="SMR" id="A5G146"/>
<dbReference type="STRING" id="349163.Acry_2384"/>
<dbReference type="KEGG" id="acr:Acry_2384"/>
<dbReference type="eggNOG" id="COG0554">
    <property type="taxonomic scope" value="Bacteria"/>
</dbReference>
<dbReference type="HOGENOM" id="CLU_009281_2_3_5"/>
<dbReference type="UniPathway" id="UPA00618">
    <property type="reaction ID" value="UER00672"/>
</dbReference>
<dbReference type="Proteomes" id="UP000000245">
    <property type="component" value="Chromosome"/>
</dbReference>
<dbReference type="GO" id="GO:0005829">
    <property type="term" value="C:cytosol"/>
    <property type="evidence" value="ECO:0007669"/>
    <property type="project" value="TreeGrafter"/>
</dbReference>
<dbReference type="GO" id="GO:0005524">
    <property type="term" value="F:ATP binding"/>
    <property type="evidence" value="ECO:0007669"/>
    <property type="project" value="UniProtKB-UniRule"/>
</dbReference>
<dbReference type="GO" id="GO:0004370">
    <property type="term" value="F:glycerol kinase activity"/>
    <property type="evidence" value="ECO:0000250"/>
    <property type="project" value="UniProtKB"/>
</dbReference>
<dbReference type="GO" id="GO:0019563">
    <property type="term" value="P:glycerol catabolic process"/>
    <property type="evidence" value="ECO:0007669"/>
    <property type="project" value="UniProtKB-UniRule"/>
</dbReference>
<dbReference type="GO" id="GO:0006071">
    <property type="term" value="P:glycerol metabolic process"/>
    <property type="evidence" value="ECO:0000250"/>
    <property type="project" value="UniProtKB"/>
</dbReference>
<dbReference type="GO" id="GO:0006072">
    <property type="term" value="P:glycerol-3-phosphate metabolic process"/>
    <property type="evidence" value="ECO:0007669"/>
    <property type="project" value="InterPro"/>
</dbReference>
<dbReference type="CDD" id="cd07769">
    <property type="entry name" value="ASKHA_NBD_FGGY_GK"/>
    <property type="match status" value="1"/>
</dbReference>
<dbReference type="FunFam" id="3.30.420.40:FF:000007">
    <property type="entry name" value="Glycerol kinase"/>
    <property type="match status" value="1"/>
</dbReference>
<dbReference type="FunFam" id="3.30.420.40:FF:000008">
    <property type="entry name" value="Glycerol kinase"/>
    <property type="match status" value="1"/>
</dbReference>
<dbReference type="Gene3D" id="3.30.420.40">
    <property type="match status" value="2"/>
</dbReference>
<dbReference type="HAMAP" id="MF_00186">
    <property type="entry name" value="Glycerol_kin"/>
    <property type="match status" value="1"/>
</dbReference>
<dbReference type="InterPro" id="IPR043129">
    <property type="entry name" value="ATPase_NBD"/>
</dbReference>
<dbReference type="InterPro" id="IPR000577">
    <property type="entry name" value="Carb_kinase_FGGY"/>
</dbReference>
<dbReference type="InterPro" id="IPR018483">
    <property type="entry name" value="Carb_kinase_FGGY_CS"/>
</dbReference>
<dbReference type="InterPro" id="IPR018485">
    <property type="entry name" value="FGGY_C"/>
</dbReference>
<dbReference type="InterPro" id="IPR018484">
    <property type="entry name" value="FGGY_N"/>
</dbReference>
<dbReference type="InterPro" id="IPR005999">
    <property type="entry name" value="Glycerol_kin"/>
</dbReference>
<dbReference type="NCBIfam" id="TIGR01311">
    <property type="entry name" value="glycerol_kin"/>
    <property type="match status" value="1"/>
</dbReference>
<dbReference type="NCBIfam" id="NF000756">
    <property type="entry name" value="PRK00047.1"/>
    <property type="match status" value="1"/>
</dbReference>
<dbReference type="PANTHER" id="PTHR10196:SF69">
    <property type="entry name" value="GLYCEROL KINASE"/>
    <property type="match status" value="1"/>
</dbReference>
<dbReference type="PANTHER" id="PTHR10196">
    <property type="entry name" value="SUGAR KINASE"/>
    <property type="match status" value="1"/>
</dbReference>
<dbReference type="Pfam" id="PF02782">
    <property type="entry name" value="FGGY_C"/>
    <property type="match status" value="1"/>
</dbReference>
<dbReference type="Pfam" id="PF00370">
    <property type="entry name" value="FGGY_N"/>
    <property type="match status" value="1"/>
</dbReference>
<dbReference type="PIRSF" id="PIRSF000538">
    <property type="entry name" value="GlpK"/>
    <property type="match status" value="1"/>
</dbReference>
<dbReference type="SUPFAM" id="SSF53067">
    <property type="entry name" value="Actin-like ATPase domain"/>
    <property type="match status" value="2"/>
</dbReference>
<dbReference type="PROSITE" id="PS00445">
    <property type="entry name" value="FGGY_KINASES_2"/>
    <property type="match status" value="1"/>
</dbReference>
<organism>
    <name type="scientific">Acidiphilium cryptum (strain JF-5)</name>
    <dbReference type="NCBI Taxonomy" id="349163"/>
    <lineage>
        <taxon>Bacteria</taxon>
        <taxon>Pseudomonadati</taxon>
        <taxon>Pseudomonadota</taxon>
        <taxon>Alphaproteobacteria</taxon>
        <taxon>Acetobacterales</taxon>
        <taxon>Acidocellaceae</taxon>
        <taxon>Acidiphilium</taxon>
    </lineage>
</organism>
<sequence length="499" mass="54375">MSRYVGAIDQGTTSSRFIVFDKGGNIVSVAQKEHRQIYPKPGWVEHDPMEILSNTNEVIGAALARANLTASDLAAVGITNQRETTLLWDRKTGQPLCNALVWMDTRTDQLVQQFTRDGGQDRFRAKTGLPLATYFAGLKLRWILDNVEGAKAKAEAGDALFGTVDSWLTWNLTGGVNGGHHVTDVTNASRTMLIDLATCAWDDDMLNAFGIPRACLPKIVPSSAVYGEIRTAPLQGTKLAGMLGDQQAALVGQTCFAPGEAKNTYGTGSFLLMNTGTEPVQSKAGLLTTLAYQLGDEKPRYALEGAIAITGALVQWLRDNLKLFDVAPQIEPLARSVEDNGDVYIVPAFSGLYAPYWKDDARGVIAGLTRYATRAHLARAALESTAYQVRDVVEAMQEDSGIRLAALKTDGGMVANELLMQFQADILNAPVVRPKMTETTALGAAYAAGLAVGYWANLEDLRANWGVDKTWEPSMPAETREKYYRSWKKAVQRSFAWVD</sequence>
<evidence type="ECO:0000255" key="1">
    <source>
        <dbReference type="HAMAP-Rule" id="MF_00186"/>
    </source>
</evidence>
<comment type="function">
    <text evidence="1">Key enzyme in the regulation of glycerol uptake and metabolism. Catalyzes the phosphorylation of glycerol to yield sn-glycerol 3-phosphate.</text>
</comment>
<comment type="catalytic activity">
    <reaction evidence="1">
        <text>glycerol + ATP = sn-glycerol 3-phosphate + ADP + H(+)</text>
        <dbReference type="Rhea" id="RHEA:21644"/>
        <dbReference type="ChEBI" id="CHEBI:15378"/>
        <dbReference type="ChEBI" id="CHEBI:17754"/>
        <dbReference type="ChEBI" id="CHEBI:30616"/>
        <dbReference type="ChEBI" id="CHEBI:57597"/>
        <dbReference type="ChEBI" id="CHEBI:456216"/>
        <dbReference type="EC" id="2.7.1.30"/>
    </reaction>
</comment>
<comment type="activity regulation">
    <text evidence="1">Inhibited by fructose 1,6-bisphosphate (FBP).</text>
</comment>
<comment type="pathway">
    <text evidence="1">Polyol metabolism; glycerol degradation via glycerol kinase pathway; sn-glycerol 3-phosphate from glycerol: step 1/1.</text>
</comment>
<comment type="similarity">
    <text evidence="1">Belongs to the FGGY kinase family.</text>
</comment>
<name>GLPK_ACICJ</name>
<feature type="chain" id="PRO_1000020692" description="Glycerol kinase">
    <location>
        <begin position="1"/>
        <end position="499"/>
    </location>
</feature>
<feature type="binding site" evidence="1">
    <location>
        <position position="12"/>
    </location>
    <ligand>
        <name>ADP</name>
        <dbReference type="ChEBI" id="CHEBI:456216"/>
    </ligand>
</feature>
<feature type="binding site" evidence="1">
    <location>
        <position position="12"/>
    </location>
    <ligand>
        <name>ATP</name>
        <dbReference type="ChEBI" id="CHEBI:30616"/>
    </ligand>
</feature>
<feature type="binding site" evidence="1">
    <location>
        <position position="12"/>
    </location>
    <ligand>
        <name>sn-glycerol 3-phosphate</name>
        <dbReference type="ChEBI" id="CHEBI:57597"/>
    </ligand>
</feature>
<feature type="binding site" evidence="1">
    <location>
        <position position="13"/>
    </location>
    <ligand>
        <name>ATP</name>
        <dbReference type="ChEBI" id="CHEBI:30616"/>
    </ligand>
</feature>
<feature type="binding site" evidence="1">
    <location>
        <position position="14"/>
    </location>
    <ligand>
        <name>ATP</name>
        <dbReference type="ChEBI" id="CHEBI:30616"/>
    </ligand>
</feature>
<feature type="binding site" evidence="1">
    <location>
        <position position="16"/>
    </location>
    <ligand>
        <name>ADP</name>
        <dbReference type="ChEBI" id="CHEBI:456216"/>
    </ligand>
</feature>
<feature type="binding site" evidence="1">
    <location>
        <position position="82"/>
    </location>
    <ligand>
        <name>glycerol</name>
        <dbReference type="ChEBI" id="CHEBI:17754"/>
    </ligand>
</feature>
<feature type="binding site" evidence="1">
    <location>
        <position position="82"/>
    </location>
    <ligand>
        <name>sn-glycerol 3-phosphate</name>
        <dbReference type="ChEBI" id="CHEBI:57597"/>
    </ligand>
</feature>
<feature type="binding site" evidence="1">
    <location>
        <position position="83"/>
    </location>
    <ligand>
        <name>glycerol</name>
        <dbReference type="ChEBI" id="CHEBI:17754"/>
    </ligand>
</feature>
<feature type="binding site" evidence="1">
    <location>
        <position position="83"/>
    </location>
    <ligand>
        <name>sn-glycerol 3-phosphate</name>
        <dbReference type="ChEBI" id="CHEBI:57597"/>
    </ligand>
</feature>
<feature type="binding site" evidence="1">
    <location>
        <position position="134"/>
    </location>
    <ligand>
        <name>glycerol</name>
        <dbReference type="ChEBI" id="CHEBI:17754"/>
    </ligand>
</feature>
<feature type="binding site" evidence="1">
    <location>
        <position position="134"/>
    </location>
    <ligand>
        <name>sn-glycerol 3-phosphate</name>
        <dbReference type="ChEBI" id="CHEBI:57597"/>
    </ligand>
</feature>
<feature type="binding site" evidence="1">
    <location>
        <position position="245"/>
    </location>
    <ligand>
        <name>glycerol</name>
        <dbReference type="ChEBI" id="CHEBI:17754"/>
    </ligand>
</feature>
<feature type="binding site" evidence="1">
    <location>
        <position position="245"/>
    </location>
    <ligand>
        <name>sn-glycerol 3-phosphate</name>
        <dbReference type="ChEBI" id="CHEBI:57597"/>
    </ligand>
</feature>
<feature type="binding site" evidence="1">
    <location>
        <position position="246"/>
    </location>
    <ligand>
        <name>glycerol</name>
        <dbReference type="ChEBI" id="CHEBI:17754"/>
    </ligand>
</feature>
<feature type="binding site" evidence="1">
    <location>
        <position position="267"/>
    </location>
    <ligand>
        <name>ADP</name>
        <dbReference type="ChEBI" id="CHEBI:456216"/>
    </ligand>
</feature>
<feature type="binding site" evidence="1">
    <location>
        <position position="267"/>
    </location>
    <ligand>
        <name>ATP</name>
        <dbReference type="ChEBI" id="CHEBI:30616"/>
    </ligand>
</feature>
<feature type="binding site" evidence="1">
    <location>
        <position position="311"/>
    </location>
    <ligand>
        <name>ADP</name>
        <dbReference type="ChEBI" id="CHEBI:456216"/>
    </ligand>
</feature>
<feature type="binding site" evidence="1">
    <location>
        <position position="311"/>
    </location>
    <ligand>
        <name>ATP</name>
        <dbReference type="ChEBI" id="CHEBI:30616"/>
    </ligand>
</feature>
<feature type="binding site" evidence="1">
    <location>
        <position position="315"/>
    </location>
    <ligand>
        <name>ATP</name>
        <dbReference type="ChEBI" id="CHEBI:30616"/>
    </ligand>
</feature>
<feature type="binding site" evidence="1">
    <location>
        <position position="412"/>
    </location>
    <ligand>
        <name>ADP</name>
        <dbReference type="ChEBI" id="CHEBI:456216"/>
    </ligand>
</feature>
<feature type="binding site" evidence="1">
    <location>
        <position position="412"/>
    </location>
    <ligand>
        <name>ATP</name>
        <dbReference type="ChEBI" id="CHEBI:30616"/>
    </ligand>
</feature>
<feature type="binding site" evidence="1">
    <location>
        <position position="416"/>
    </location>
    <ligand>
        <name>ADP</name>
        <dbReference type="ChEBI" id="CHEBI:456216"/>
    </ligand>
</feature>
<accession>A5G146</accession>
<reference key="1">
    <citation type="submission" date="2007-05" db="EMBL/GenBank/DDBJ databases">
        <title>Complete sequence of chromosome of Acidiphilium cryptum JF-5.</title>
        <authorList>
            <consortium name="US DOE Joint Genome Institute"/>
            <person name="Copeland A."/>
            <person name="Lucas S."/>
            <person name="Lapidus A."/>
            <person name="Barry K."/>
            <person name="Detter J.C."/>
            <person name="Glavina del Rio T."/>
            <person name="Hammon N."/>
            <person name="Israni S."/>
            <person name="Dalin E."/>
            <person name="Tice H."/>
            <person name="Pitluck S."/>
            <person name="Sims D."/>
            <person name="Brettin T."/>
            <person name="Bruce D."/>
            <person name="Han C."/>
            <person name="Schmutz J."/>
            <person name="Larimer F."/>
            <person name="Land M."/>
            <person name="Hauser L."/>
            <person name="Kyrpides N."/>
            <person name="Kim E."/>
            <person name="Magnuson T."/>
            <person name="Richardson P."/>
        </authorList>
    </citation>
    <scope>NUCLEOTIDE SEQUENCE [LARGE SCALE GENOMIC DNA]</scope>
    <source>
        <strain>JF-5</strain>
    </source>
</reference>
<gene>
    <name evidence="1" type="primary">glpK</name>
    <name type="ordered locus">Acry_2384</name>
</gene>
<proteinExistence type="inferred from homology"/>
<protein>
    <recommendedName>
        <fullName evidence="1">Glycerol kinase</fullName>
        <ecNumber evidence="1">2.7.1.30</ecNumber>
    </recommendedName>
    <alternativeName>
        <fullName evidence="1">ATP:glycerol 3-phosphotransferase</fullName>
    </alternativeName>
    <alternativeName>
        <fullName evidence="1">Glycerokinase</fullName>
        <shortName evidence="1">GK</shortName>
    </alternativeName>
</protein>
<keyword id="KW-0067">ATP-binding</keyword>
<keyword id="KW-0319">Glycerol metabolism</keyword>
<keyword id="KW-0418">Kinase</keyword>
<keyword id="KW-0547">Nucleotide-binding</keyword>
<keyword id="KW-1185">Reference proteome</keyword>
<keyword id="KW-0808">Transferase</keyword>